<organism>
    <name type="scientific">Shewanella baltica (strain OS185)</name>
    <dbReference type="NCBI Taxonomy" id="402882"/>
    <lineage>
        <taxon>Bacteria</taxon>
        <taxon>Pseudomonadati</taxon>
        <taxon>Pseudomonadota</taxon>
        <taxon>Gammaproteobacteria</taxon>
        <taxon>Alteromonadales</taxon>
        <taxon>Shewanellaceae</taxon>
        <taxon>Shewanella</taxon>
    </lineage>
</organism>
<accession>A6WPI0</accession>
<sequence length="214" mass="23156">MRIILLGAPGAGKGTQAQFIMEQYGIPQISTGDMLRAAVKAGTPLGLEAKKVMDAGQLVSDDLIIGLVKERIAQEDCVKGFLLDGFPRTIPQADAMAANGISIDHVIEIDVPDEEIVKRMSGRRVHPGSGRVYHVVFNPPKVEGKDDVTGEDLAIRPDDEESTVRKRLAIYHEQTKPLVEYYGKVAAAGQTQYNKFDGTQSVAAVSEQLASVLK</sequence>
<reference key="1">
    <citation type="submission" date="2007-07" db="EMBL/GenBank/DDBJ databases">
        <title>Complete sequence of chromosome of Shewanella baltica OS185.</title>
        <authorList>
            <consortium name="US DOE Joint Genome Institute"/>
            <person name="Copeland A."/>
            <person name="Lucas S."/>
            <person name="Lapidus A."/>
            <person name="Barry K."/>
            <person name="Glavina del Rio T."/>
            <person name="Dalin E."/>
            <person name="Tice H."/>
            <person name="Pitluck S."/>
            <person name="Sims D."/>
            <person name="Brettin T."/>
            <person name="Bruce D."/>
            <person name="Detter J.C."/>
            <person name="Han C."/>
            <person name="Schmutz J."/>
            <person name="Larimer F."/>
            <person name="Land M."/>
            <person name="Hauser L."/>
            <person name="Kyrpides N."/>
            <person name="Mikhailova N."/>
            <person name="Brettar I."/>
            <person name="Rodrigues J."/>
            <person name="Konstantinidis K."/>
            <person name="Tiedje J."/>
            <person name="Richardson P."/>
        </authorList>
    </citation>
    <scope>NUCLEOTIDE SEQUENCE [LARGE SCALE GENOMIC DNA]</scope>
    <source>
        <strain>OS185</strain>
    </source>
</reference>
<evidence type="ECO:0000255" key="1">
    <source>
        <dbReference type="HAMAP-Rule" id="MF_00235"/>
    </source>
</evidence>
<dbReference type="EC" id="2.7.4.3" evidence="1"/>
<dbReference type="EMBL" id="CP000753">
    <property type="protein sequence ID" value="ABS08719.1"/>
    <property type="molecule type" value="Genomic_DNA"/>
</dbReference>
<dbReference type="RefSeq" id="WP_006082054.1">
    <property type="nucleotide sequence ID" value="NC_009665.1"/>
</dbReference>
<dbReference type="SMR" id="A6WPI0"/>
<dbReference type="GeneID" id="11772751"/>
<dbReference type="KEGG" id="sbm:Shew185_2584"/>
<dbReference type="HOGENOM" id="CLU_032354_1_2_6"/>
<dbReference type="UniPathway" id="UPA00588">
    <property type="reaction ID" value="UER00649"/>
</dbReference>
<dbReference type="GO" id="GO:0005737">
    <property type="term" value="C:cytoplasm"/>
    <property type="evidence" value="ECO:0007669"/>
    <property type="project" value="UniProtKB-SubCell"/>
</dbReference>
<dbReference type="GO" id="GO:0004017">
    <property type="term" value="F:adenylate kinase activity"/>
    <property type="evidence" value="ECO:0007669"/>
    <property type="project" value="UniProtKB-UniRule"/>
</dbReference>
<dbReference type="GO" id="GO:0005524">
    <property type="term" value="F:ATP binding"/>
    <property type="evidence" value="ECO:0007669"/>
    <property type="project" value="UniProtKB-UniRule"/>
</dbReference>
<dbReference type="GO" id="GO:0044209">
    <property type="term" value="P:AMP salvage"/>
    <property type="evidence" value="ECO:0007669"/>
    <property type="project" value="UniProtKB-UniRule"/>
</dbReference>
<dbReference type="CDD" id="cd01428">
    <property type="entry name" value="ADK"/>
    <property type="match status" value="1"/>
</dbReference>
<dbReference type="FunFam" id="3.40.50.300:FF:000106">
    <property type="entry name" value="Adenylate kinase mitochondrial"/>
    <property type="match status" value="1"/>
</dbReference>
<dbReference type="Gene3D" id="3.40.50.300">
    <property type="entry name" value="P-loop containing nucleotide triphosphate hydrolases"/>
    <property type="match status" value="1"/>
</dbReference>
<dbReference type="HAMAP" id="MF_00235">
    <property type="entry name" value="Adenylate_kinase_Adk"/>
    <property type="match status" value="1"/>
</dbReference>
<dbReference type="InterPro" id="IPR006259">
    <property type="entry name" value="Adenyl_kin_sub"/>
</dbReference>
<dbReference type="InterPro" id="IPR000850">
    <property type="entry name" value="Adenylat/UMP-CMP_kin"/>
</dbReference>
<dbReference type="InterPro" id="IPR033690">
    <property type="entry name" value="Adenylat_kinase_CS"/>
</dbReference>
<dbReference type="InterPro" id="IPR007862">
    <property type="entry name" value="Adenylate_kinase_lid-dom"/>
</dbReference>
<dbReference type="InterPro" id="IPR027417">
    <property type="entry name" value="P-loop_NTPase"/>
</dbReference>
<dbReference type="NCBIfam" id="TIGR01351">
    <property type="entry name" value="adk"/>
    <property type="match status" value="1"/>
</dbReference>
<dbReference type="NCBIfam" id="NF001379">
    <property type="entry name" value="PRK00279.1-1"/>
    <property type="match status" value="1"/>
</dbReference>
<dbReference type="NCBIfam" id="NF001380">
    <property type="entry name" value="PRK00279.1-2"/>
    <property type="match status" value="1"/>
</dbReference>
<dbReference type="NCBIfam" id="NF001381">
    <property type="entry name" value="PRK00279.1-3"/>
    <property type="match status" value="1"/>
</dbReference>
<dbReference type="NCBIfam" id="NF011100">
    <property type="entry name" value="PRK14527.1"/>
    <property type="match status" value="1"/>
</dbReference>
<dbReference type="PANTHER" id="PTHR23359">
    <property type="entry name" value="NUCLEOTIDE KINASE"/>
    <property type="match status" value="1"/>
</dbReference>
<dbReference type="Pfam" id="PF00406">
    <property type="entry name" value="ADK"/>
    <property type="match status" value="1"/>
</dbReference>
<dbReference type="Pfam" id="PF05191">
    <property type="entry name" value="ADK_lid"/>
    <property type="match status" value="1"/>
</dbReference>
<dbReference type="PRINTS" id="PR00094">
    <property type="entry name" value="ADENYLTKNASE"/>
</dbReference>
<dbReference type="SUPFAM" id="SSF52540">
    <property type="entry name" value="P-loop containing nucleoside triphosphate hydrolases"/>
    <property type="match status" value="1"/>
</dbReference>
<dbReference type="PROSITE" id="PS00113">
    <property type="entry name" value="ADENYLATE_KINASE"/>
    <property type="match status" value="1"/>
</dbReference>
<proteinExistence type="inferred from homology"/>
<comment type="function">
    <text evidence="1">Catalyzes the reversible transfer of the terminal phosphate group between ATP and AMP. Plays an important role in cellular energy homeostasis and in adenine nucleotide metabolism.</text>
</comment>
<comment type="catalytic activity">
    <reaction evidence="1">
        <text>AMP + ATP = 2 ADP</text>
        <dbReference type="Rhea" id="RHEA:12973"/>
        <dbReference type="ChEBI" id="CHEBI:30616"/>
        <dbReference type="ChEBI" id="CHEBI:456215"/>
        <dbReference type="ChEBI" id="CHEBI:456216"/>
        <dbReference type="EC" id="2.7.4.3"/>
    </reaction>
</comment>
<comment type="pathway">
    <text evidence="1">Purine metabolism; AMP biosynthesis via salvage pathway; AMP from ADP: step 1/1.</text>
</comment>
<comment type="subunit">
    <text evidence="1">Monomer.</text>
</comment>
<comment type="subcellular location">
    <subcellularLocation>
        <location evidence="1">Cytoplasm</location>
    </subcellularLocation>
</comment>
<comment type="domain">
    <text evidence="1">Consists of three domains, a large central CORE domain and two small peripheral domains, NMPbind and LID, which undergo movements during catalysis. The LID domain closes over the site of phosphoryl transfer upon ATP binding. Assembling and dissambling the active center during each catalytic cycle provides an effective means to prevent ATP hydrolysis.</text>
</comment>
<comment type="similarity">
    <text evidence="1">Belongs to the adenylate kinase family.</text>
</comment>
<name>KAD_SHEB8</name>
<gene>
    <name evidence="1" type="primary">adk</name>
    <name type="ordered locus">Shew185_2584</name>
</gene>
<feature type="chain" id="PRO_1000058895" description="Adenylate kinase">
    <location>
        <begin position="1"/>
        <end position="214"/>
    </location>
</feature>
<feature type="region of interest" description="NMP" evidence="1">
    <location>
        <begin position="30"/>
        <end position="59"/>
    </location>
</feature>
<feature type="region of interest" description="LID" evidence="1">
    <location>
        <begin position="122"/>
        <end position="159"/>
    </location>
</feature>
<feature type="binding site" evidence="1">
    <location>
        <begin position="10"/>
        <end position="15"/>
    </location>
    <ligand>
        <name>ATP</name>
        <dbReference type="ChEBI" id="CHEBI:30616"/>
    </ligand>
</feature>
<feature type="binding site" evidence="1">
    <location>
        <position position="31"/>
    </location>
    <ligand>
        <name>AMP</name>
        <dbReference type="ChEBI" id="CHEBI:456215"/>
    </ligand>
</feature>
<feature type="binding site" evidence="1">
    <location>
        <position position="36"/>
    </location>
    <ligand>
        <name>AMP</name>
        <dbReference type="ChEBI" id="CHEBI:456215"/>
    </ligand>
</feature>
<feature type="binding site" evidence="1">
    <location>
        <begin position="57"/>
        <end position="59"/>
    </location>
    <ligand>
        <name>AMP</name>
        <dbReference type="ChEBI" id="CHEBI:456215"/>
    </ligand>
</feature>
<feature type="binding site" evidence="1">
    <location>
        <begin position="85"/>
        <end position="88"/>
    </location>
    <ligand>
        <name>AMP</name>
        <dbReference type="ChEBI" id="CHEBI:456215"/>
    </ligand>
</feature>
<feature type="binding site" evidence="1">
    <location>
        <position position="92"/>
    </location>
    <ligand>
        <name>AMP</name>
        <dbReference type="ChEBI" id="CHEBI:456215"/>
    </ligand>
</feature>
<feature type="binding site" evidence="1">
    <location>
        <position position="123"/>
    </location>
    <ligand>
        <name>ATP</name>
        <dbReference type="ChEBI" id="CHEBI:30616"/>
    </ligand>
</feature>
<feature type="binding site" evidence="1">
    <location>
        <begin position="132"/>
        <end position="133"/>
    </location>
    <ligand>
        <name>ATP</name>
        <dbReference type="ChEBI" id="CHEBI:30616"/>
    </ligand>
</feature>
<feature type="binding site" evidence="1">
    <location>
        <position position="156"/>
    </location>
    <ligand>
        <name>AMP</name>
        <dbReference type="ChEBI" id="CHEBI:456215"/>
    </ligand>
</feature>
<feature type="binding site" evidence="1">
    <location>
        <position position="167"/>
    </location>
    <ligand>
        <name>AMP</name>
        <dbReference type="ChEBI" id="CHEBI:456215"/>
    </ligand>
</feature>
<feature type="binding site" evidence="1">
    <location>
        <position position="200"/>
    </location>
    <ligand>
        <name>ATP</name>
        <dbReference type="ChEBI" id="CHEBI:30616"/>
    </ligand>
</feature>
<protein>
    <recommendedName>
        <fullName evidence="1">Adenylate kinase</fullName>
        <shortName evidence="1">AK</shortName>
        <ecNumber evidence="1">2.7.4.3</ecNumber>
    </recommendedName>
    <alternativeName>
        <fullName evidence="1">ATP-AMP transphosphorylase</fullName>
    </alternativeName>
    <alternativeName>
        <fullName evidence="1">ATP:AMP phosphotransferase</fullName>
    </alternativeName>
    <alternativeName>
        <fullName evidence="1">Adenylate monophosphate kinase</fullName>
    </alternativeName>
</protein>
<keyword id="KW-0067">ATP-binding</keyword>
<keyword id="KW-0963">Cytoplasm</keyword>
<keyword id="KW-0418">Kinase</keyword>
<keyword id="KW-0545">Nucleotide biosynthesis</keyword>
<keyword id="KW-0547">Nucleotide-binding</keyword>
<keyword id="KW-0808">Transferase</keyword>